<dbReference type="EMBL" id="AL590442">
    <property type="protein sequence ID" value="CAD25107.1"/>
    <property type="molecule type" value="Genomic_DNA"/>
</dbReference>
<dbReference type="RefSeq" id="NP_584603.1">
    <property type="nucleotide sequence ID" value="NM_001040792.1"/>
</dbReference>
<dbReference type="PDB" id="7QEP">
    <property type="method" value="EM"/>
    <property type="resolution" value="2.70 A"/>
    <property type="chains" value="C7=1-120"/>
</dbReference>
<dbReference type="PDBsum" id="7QEP"/>
<dbReference type="EMDB" id="EMD-13936"/>
<dbReference type="SMR" id="Q8SSF9"/>
<dbReference type="FunCoup" id="Q8SSF9">
    <property type="interactions" value="213"/>
</dbReference>
<dbReference type="STRING" id="284813.Q8SSF9"/>
<dbReference type="GeneID" id="858593"/>
<dbReference type="KEGG" id="ecu:ECU02_0770"/>
<dbReference type="VEuPathDB" id="MicrosporidiaDB:ECU02_0770"/>
<dbReference type="HOGENOM" id="CLU_112958_2_2_1"/>
<dbReference type="InParanoid" id="Q8SSF9"/>
<dbReference type="OMA" id="MKRIQQG"/>
<dbReference type="OrthoDB" id="1727351at2759"/>
<dbReference type="Proteomes" id="UP000000819">
    <property type="component" value="Chromosome II"/>
</dbReference>
<dbReference type="GO" id="GO:0005737">
    <property type="term" value="C:cytoplasm"/>
    <property type="evidence" value="ECO:0007669"/>
    <property type="project" value="UniProtKB-SubCell"/>
</dbReference>
<dbReference type="GO" id="GO:1990904">
    <property type="term" value="C:ribonucleoprotein complex"/>
    <property type="evidence" value="ECO:0007669"/>
    <property type="project" value="UniProtKB-KW"/>
</dbReference>
<dbReference type="GO" id="GO:0005840">
    <property type="term" value="C:ribosome"/>
    <property type="evidence" value="ECO:0007669"/>
    <property type="project" value="UniProtKB-KW"/>
</dbReference>
<dbReference type="GO" id="GO:0003735">
    <property type="term" value="F:structural constituent of ribosome"/>
    <property type="evidence" value="ECO:0007669"/>
    <property type="project" value="InterPro"/>
</dbReference>
<dbReference type="GO" id="GO:0006412">
    <property type="term" value="P:translation"/>
    <property type="evidence" value="ECO:0007669"/>
    <property type="project" value="InterPro"/>
</dbReference>
<dbReference type="Gene3D" id="1.10.60.20">
    <property type="entry name" value="Ribosomal protein S17e-like"/>
    <property type="match status" value="1"/>
</dbReference>
<dbReference type="HAMAP" id="MF_00511">
    <property type="entry name" value="Ribosomal_eS17"/>
    <property type="match status" value="1"/>
</dbReference>
<dbReference type="InterPro" id="IPR001210">
    <property type="entry name" value="Ribosomal_eS17"/>
</dbReference>
<dbReference type="InterPro" id="IPR036401">
    <property type="entry name" value="Ribosomal_eS17_sf"/>
</dbReference>
<dbReference type="PANTHER" id="PTHR10732">
    <property type="entry name" value="40S RIBOSOMAL PROTEIN S17"/>
    <property type="match status" value="1"/>
</dbReference>
<dbReference type="PANTHER" id="PTHR10732:SF0">
    <property type="entry name" value="40S RIBOSOMAL PROTEIN S17"/>
    <property type="match status" value="1"/>
</dbReference>
<dbReference type="Pfam" id="PF00833">
    <property type="entry name" value="Ribosomal_S17e"/>
    <property type="match status" value="1"/>
</dbReference>
<dbReference type="SUPFAM" id="SSF116820">
    <property type="entry name" value="Rps17e-like"/>
    <property type="match status" value="1"/>
</dbReference>
<proteinExistence type="evidence at protein level"/>
<evidence type="ECO:0000250" key="1"/>
<evidence type="ECO:0000269" key="2">
    <source>
    </source>
</evidence>
<evidence type="ECO:0000305" key="3"/>
<comment type="subunit">
    <text evidence="1">Component of the small ribosomal subunit.</text>
</comment>
<comment type="subcellular location">
    <subcellularLocation>
        <location evidence="1">Cytoplasm</location>
    </subcellularLocation>
</comment>
<comment type="developmental stage">
    <text evidence="2">Expressed in late sporogonial stages.</text>
</comment>
<comment type="similarity">
    <text evidence="3">Belongs to the eukaryotic ribosomal protein eS17 family.</text>
</comment>
<accession>Q8SSF9</accession>
<reference key="1">
    <citation type="journal article" date="2001" name="Nature">
        <title>Genome sequence and gene compaction of the eukaryote parasite Encephalitozoon cuniculi.</title>
        <authorList>
            <person name="Katinka M.D."/>
            <person name="Duprat S."/>
            <person name="Cornillot E."/>
            <person name="Metenier G."/>
            <person name="Thomarat F."/>
            <person name="Prensier G."/>
            <person name="Barbe V."/>
            <person name="Peyretaillade E."/>
            <person name="Brottier P."/>
            <person name="Wincker P."/>
            <person name="Delbac F."/>
            <person name="El Alaoui H."/>
            <person name="Peyret P."/>
            <person name="Saurin W."/>
            <person name="Gouy M."/>
            <person name="Weissenbach J."/>
            <person name="Vivares C.P."/>
        </authorList>
    </citation>
    <scope>NUCLEOTIDE SEQUENCE [LARGE SCALE GENOMIC DNA]</scope>
    <source>
        <strain>GB-M1</strain>
    </source>
</reference>
<reference key="2">
    <citation type="journal article" date="2006" name="Proteomics">
        <title>Proteomic analysis of the eukaryotic parasite Encephalitozoon cuniculi (microsporidia): a reference map for proteins expressed in late sporogonial stages.</title>
        <authorList>
            <person name="Brosson D."/>
            <person name="Kuhn L."/>
            <person name="Delbac F."/>
            <person name="Garin J."/>
            <person name="Vivares C.P."/>
            <person name="Texier C."/>
        </authorList>
    </citation>
    <scope>IDENTIFICATION BY MASS SPECTROMETRY [LARGE SCALE ANALYSIS]</scope>
    <scope>DEVELOPMENTAL STAGE</scope>
</reference>
<keyword id="KW-0002">3D-structure</keyword>
<keyword id="KW-0963">Cytoplasm</keyword>
<keyword id="KW-1185">Reference proteome</keyword>
<keyword id="KW-0687">Ribonucleoprotein</keyword>
<keyword id="KW-0689">Ribosomal protein</keyword>
<protein>
    <recommendedName>
        <fullName evidence="3">Small ribosomal subunit protein eS17</fullName>
    </recommendedName>
    <alternativeName>
        <fullName>40S ribosomal protein S17</fullName>
    </alternativeName>
</protein>
<sequence>MGCVRNKIVKRAARTIAEKYFQRLDSTFDHNLLVVQDVAVVQSKKLKNEIAGYLTSLYKKILKGTYNKVYIKSHEEERERKENVIPKESMLDVDCVEVDDVTMEMIKRYGYEGNFKVYGM</sequence>
<feature type="chain" id="PRO_0000383132" description="Small ribosomal subunit protein eS17">
    <location>
        <begin position="1"/>
        <end position="120"/>
    </location>
</feature>
<gene>
    <name type="primary">RPS17</name>
    <name type="ordered locus">ECU02_0770</name>
</gene>
<name>RS17_ENCCU</name>
<organism>
    <name type="scientific">Encephalitozoon cuniculi (strain GB-M1)</name>
    <name type="common">Microsporidian parasite</name>
    <dbReference type="NCBI Taxonomy" id="284813"/>
    <lineage>
        <taxon>Eukaryota</taxon>
        <taxon>Fungi</taxon>
        <taxon>Fungi incertae sedis</taxon>
        <taxon>Microsporidia</taxon>
        <taxon>Unikaryonidae</taxon>
        <taxon>Encephalitozoon</taxon>
    </lineage>
</organism>